<accession>O11840</accession>
<sequence>MSSEGRYMTWKDMSHNKFMTDRWARVSDVVSVIKQSHAMDLSKAANLSIIKTALAGLGSGWTDNNPFVSPMTRFPQTLTMYGALVLYVNLSDPEFALIMTKVSTLTDSGLADNASANVRRDVVSGNKAESSGKTAGTNENSAYTLTVSLAGLAQALRLEELMWTRDKFEDRLKLPWTPVQGRTSPPGQXQLAAARVTAHIRAAKRALLYPGDSPEWVGWKHFYPPPPYDVYDVPPLDIINAKLAADDIGGLVTPTPASSHGLPFEVSEEVEQANRNSLWLTVGLLLAALAVGIGVAAYHRKKLQSRLRELKLLWGSTGGSGGGGGFDTELYMRATDTVSLGTTLSEHAASAPSGLRHRPAATDSGPHEALPFEVWVFDNLAVVYDSIGMSDLFYTVREFVGVFNGEFEGLIELLESPDDDDGVYTNAPRDTAIDAYESQENYDRIDIETVLIERRINLKKLLLEEAELERRERDMTMIADEEQRTLLHRLESSRVEATHAVAKAEADARAAVAMAALASKEANDYDSKMAFDRSCKEQELRLRELEVNSMPSKTERYVHTGIQGGAQLAGAMAVGAMLRRGAGSSSQTVSSGANIGSRSQSLTRGRSASQPLSSVGGSTRGVNNNISNTNLVRAGNSAEVSAGRSTNSGNSNFWSKLRVGEGWSKYSVERAATRAQRAIVLPAPPSAPAG</sequence>
<gene>
    <name type="ORF">ORF2-ORF3</name>
</gene>
<organismHost>
    <name type="scientific">Beta macrocarpa</name>
    <name type="common">Beet</name>
    <name type="synonym">Beta vulgaris subsp. macrocarpa</name>
    <dbReference type="NCBI Taxonomy" id="343494"/>
</organismHost>
<organismHost>
    <name type="scientific">Beta vulgaris</name>
    <name type="common">Sugar beet</name>
    <dbReference type="NCBI Taxonomy" id="161934"/>
</organismHost>
<organismHost>
    <name type="scientific">Spinacia oleracea</name>
    <name type="common">Spinach</name>
    <dbReference type="NCBI Taxonomy" id="3562"/>
</organismHost>
<name>CAPSD_BNYVS</name>
<reference key="1">
    <citation type="journal article" date="1996" name="Arch. Virol.">
        <title>Complete nucleotide sequence of the Japanese isolate S of beet necrotic yellow vein virus RNA and comparison with European isolates.</title>
        <authorList>
            <person name="Saito M."/>
            <person name="Kiguchi T."/>
            <person name="Kusume T."/>
            <person name="Tamada T."/>
        </authorList>
    </citation>
    <scope>NUCLEOTIDE SEQUENCE [GENOMIC RNA] (ISOFORM CAPSID PROTEIN AND CAPSID READTHROUGH PROTEIN)</scope>
</reference>
<reference key="2">
    <citation type="journal article" date="1994" name="Arch. Virol.">
        <title>Detection by immunogold labelling of P75 readthrough protein near an extremity of beet necrotic yello w vein virus particles.</title>
        <authorList>
            <person name="Haeberle A.M."/>
            <person name="Stussi-Garaud C."/>
            <person name="Schmitt C."/>
            <person name="Garaud J.C."/>
            <person name="Richards K.E."/>
            <person name="Guilley H."/>
            <person name="Jonard G."/>
        </authorList>
    </citation>
    <scope>FUNCTION</scope>
    <scope>SUBCELLULAR LOCATION</scope>
</reference>
<reference key="3">
    <citation type="journal article" date="1996" name="J. Gen. Virol.">
        <title>High resolution analysis of the readthrough domain of beet necrotic yellow vein virus readthrough protein: a KTER motif is important for efficient transmission of the virus by Polymyxa betae.</title>
        <authorList>
            <person name="Tamada T."/>
            <person name="Schmitt C."/>
            <person name="Saito M."/>
            <person name="Guilley H."/>
            <person name="Richards K."/>
            <person name="Jonard G."/>
        </authorList>
    </citation>
    <scope>MUTAGENESIS OF 553-LYS--GLU-555</scope>
</reference>
<keyword id="KW-0167">Capsid protein</keyword>
<keyword id="KW-0175">Coiled coil</keyword>
<keyword id="KW-1139">Helical capsid protein</keyword>
<keyword id="KW-1185">Reference proteome</keyword>
<keyword id="KW-0688">Ribosomal frameshifting</keyword>
<keyword id="KW-0946">Virion</keyword>
<comment type="function">
    <molecule>Isoform Capsid protein</molecule>
    <text evidence="3">Self-assembles to form a helical capsid wrapping up the viral genomic DNA.</text>
</comment>
<comment type="function">
    <molecule>Isoform Capsid readthrough protein</molecule>
    <text evidence="3">Minor capsid protein involved in virus transmission by the vector S.subterranea.</text>
</comment>
<comment type="subcellular location">
    <molecule>Capsid readthrough protein</molecule>
    <subcellularLocation>
        <location evidence="3">Virion</location>
    </subcellularLocation>
    <text evidence="3">Associated with one extremity of viral particles.</text>
</comment>
<comment type="subcellular location">
    <molecule>Isoform Capsid protein</molecule>
    <subcellularLocation>
        <location evidence="3">Virion</location>
    </subcellularLocation>
</comment>
<comment type="alternative products">
    <event type="ribosomal frameshifting"/>
    <isoform>
        <id>O11840-1</id>
        <name>Capsid readthrough protein</name>
        <name>CP-RT</name>
        <sequence type="displayed"/>
    </isoform>
    <isoform>
        <id>O11840-2</id>
        <name>Capsid protein</name>
        <name>CP</name>
        <sequence type="described" ref="VSP_047620"/>
    </isoform>
</comment>
<comment type="miscellaneous">
    <text evidence="6">This protein is translated as a fusion protein by episodic readthrough of the termination codon at the end of the capsid protein. Readthrough of the terminator codon TAG occurs between the codons for Gln-188 and Gln-190 in about 10% of translation events, thereby producing the 75 kDa readthrough protein (PubMed:8757975).</text>
</comment>
<comment type="similarity">
    <text evidence="5">Belongs to the virgaviridae capsid protein family.</text>
</comment>
<proteinExistence type="evidence at protein level"/>
<organism>
    <name type="scientific">Beet necrotic yellow vein virus (isolate Japan/S)</name>
    <name type="common">BNYVV</name>
    <dbReference type="NCBI Taxonomy" id="652670"/>
    <lineage>
        <taxon>Viruses</taxon>
        <taxon>Riboviria</taxon>
        <taxon>Orthornavirae</taxon>
        <taxon>Kitrinoviricota</taxon>
        <taxon>Alsuviricetes</taxon>
        <taxon>Hepelivirales</taxon>
        <taxon>Benyviridae</taxon>
        <taxon>Benyvirus</taxon>
        <taxon>Beet necrotic yellow vein virus</taxon>
    </lineage>
</organism>
<feature type="chain" id="PRO_5000140115" description="Capsid readthrough protein">
    <location>
        <begin position="1"/>
        <end position="690"/>
    </location>
</feature>
<feature type="region of interest" description="Disordered" evidence="2">
    <location>
        <begin position="583"/>
        <end position="628"/>
    </location>
</feature>
<feature type="coiled-coil region" evidence="1">
    <location>
        <begin position="451"/>
        <end position="509"/>
    </location>
</feature>
<feature type="short sequence motif" description="Involved in virus transmission by the vector">
    <location>
        <begin position="553"/>
        <end position="556"/>
    </location>
</feature>
<feature type="splice variant" id="VSP_047620" description="In isoform Capsid protein." evidence="5">
    <location>
        <begin position="189"/>
        <end position="690"/>
    </location>
</feature>
<feature type="mutagenesis site" description="Complete loss of virus transmission by the vector." evidence="4">
    <original>KTE</original>
    <variation>ATA</variation>
    <location>
        <begin position="553"/>
        <end position="555"/>
    </location>
</feature>
<evidence type="ECO:0000255" key="1"/>
<evidence type="ECO:0000256" key="2">
    <source>
        <dbReference type="SAM" id="MobiDB-lite"/>
    </source>
</evidence>
<evidence type="ECO:0000269" key="3">
    <source>
    </source>
</evidence>
<evidence type="ECO:0000269" key="4">
    <source>
    </source>
</evidence>
<evidence type="ECO:0000305" key="5"/>
<evidence type="ECO:0000305" key="6">
    <source>
    </source>
</evidence>
<dbReference type="EMBL" id="D84411">
    <property type="protein sequence ID" value="BAA18968.2"/>
    <property type="molecule type" value="Genomic_RNA"/>
</dbReference>
<dbReference type="RefSeq" id="NP_612616.2">
    <property type="nucleotide sequence ID" value="NC_003515.1"/>
</dbReference>
<dbReference type="KEGG" id="vg:991083"/>
<dbReference type="Proteomes" id="UP000001100">
    <property type="component" value="Genome"/>
</dbReference>
<dbReference type="GO" id="GO:0019029">
    <property type="term" value="C:helical viral capsid"/>
    <property type="evidence" value="ECO:0007669"/>
    <property type="project" value="UniProtKB-KW"/>
</dbReference>
<dbReference type="GO" id="GO:0005198">
    <property type="term" value="F:structural molecule activity"/>
    <property type="evidence" value="ECO:0007669"/>
    <property type="project" value="InterPro"/>
</dbReference>
<dbReference type="GO" id="GO:0075523">
    <property type="term" value="P:viral translational frameshifting"/>
    <property type="evidence" value="ECO:0007669"/>
    <property type="project" value="UniProtKB-KW"/>
</dbReference>
<dbReference type="Gene3D" id="1.20.120.70">
    <property type="entry name" value="Tobacco mosaic virus-like, coat protein"/>
    <property type="match status" value="1"/>
</dbReference>
<dbReference type="InterPro" id="IPR001337">
    <property type="entry name" value="TMV-like_coat"/>
</dbReference>
<dbReference type="InterPro" id="IPR036417">
    <property type="entry name" value="TMV-like_coat_sf"/>
</dbReference>
<dbReference type="Pfam" id="PF00721">
    <property type="entry name" value="TMV_coat"/>
    <property type="match status" value="1"/>
</dbReference>
<protein>
    <recommendedName>
        <fullName>Capsid readthrough protein</fullName>
    </recommendedName>
    <alternativeName>
        <fullName>CP-RT</fullName>
    </alternativeName>
</protein>